<protein>
    <recommendedName>
        <fullName evidence="1">DNA-directed RNA polymerase subunit beta</fullName>
        <ecNumber evidence="1">2.7.7.6</ecNumber>
    </recommendedName>
    <alternativeName>
        <fullName evidence="1">PEP</fullName>
    </alternativeName>
    <alternativeName>
        <fullName evidence="1">Plastid-encoded RNA polymerase subunit beta</fullName>
        <shortName evidence="1">RNA polymerase subunit beta</shortName>
    </alternativeName>
</protein>
<sequence length="1072" mass="120437">MLLDENKGTSTIPEFGKIQFEGFCRFIDQGLIEELQNFPKIEDTDQEIESQLFGNKYELAEPLIKERNAVYQSLTYSSELYVPARLIQRNSRKIQKQTVLIGNLPLMNSQGTFVVNGISRIVVNQILRSPGIYYSSEPDQSGITLYTSTIISDWGGRSKLEIDGKTRIWARVSKKRKISIPILLSAMGSNLGEILDNVCYPKIFLSLLTERQEQKEYLRSKKNAILEFYKKLYCVSGDLVFSESLCKELRKKFLQQRCELGKIGRRNPNQKLNLDIPENEIFSLPQDVLAAVDYSIRVKFGMGTLDDMDHLKNRRIRSVADLLQNQFGLALGRLENAVRRTIRRATKRKCLPTPNNLVTSTPLTTTFQDFFGSHPLSQFLDQTNPLTEIVHRRKLSYLGPGGLTGRTASSRIRDIHPSHYGRICPIETSEGMNAGLVASLAIRARIGHCGSLQSPFHKISERSEEEHMVYLSSGEDEYYRIATGNYLALNQGIREEQVTPARYRQEFLAIAWEQIHFRSIFPFQYFSVGVSLIPFLEHNDANRALMGSNMQRQAVPLFQPEKCIVGTGLEGQAAPDSGSAAIATQGGRITYIDAGKITSSVDGDTVGTELVTYQRSNNNTCMHQKPRVRRGEYVKKGQILADGAATVGGELSLGKNILVAHMPWEGYNFEDAILISERLVYEDIYTSFHIERYGIVTCMTSQGPERITKEIPHLDAHLLRHLDGNGLVMLGSWVETGDVLVGKLTPQPAEESLRAPEGRLLQAIFGIQVSSARESCLRVPIGGRGRVIDVRWIHKEENFGDNAEVVHVYIFQKRKIQVGDKVAGRLGNKGIISKILPRQDMPYLQDGTSVDMVLNPLGVLSRMNVGQIFECLPGLAGNLMNRHYRITPFDERYEREASRKPVFPELYGASEQTANPWVFEPNHPGKNRLIDGRTGDTLEQPVTTGKAYMPKLIHQVDDKIHARSSGPYALVTQQPLRGKSKRGGQRVGEMEVWALEGFGVAYILQEMLTLKSDHIGARHEVLGAIITGGPIPRPGTAPESFRLLVRELRSLAPELDHAIIYENDFQIDRKEV</sequence>
<accession>A6H5F9</accession>
<organism>
    <name type="scientific">Cycas taitungensis</name>
    <name type="common">Prince sago</name>
    <name type="synonym">Cycas taiwaniana</name>
    <dbReference type="NCBI Taxonomy" id="54799"/>
    <lineage>
        <taxon>Eukaryota</taxon>
        <taxon>Viridiplantae</taxon>
        <taxon>Streptophyta</taxon>
        <taxon>Embryophyta</taxon>
        <taxon>Tracheophyta</taxon>
        <taxon>Spermatophyta</taxon>
        <taxon>Cycadidae</taxon>
        <taxon>Cycadales</taxon>
        <taxon>Cycadaceae</taxon>
        <taxon>Cycas</taxon>
    </lineage>
</organism>
<gene>
    <name evidence="1" type="primary">rpoB</name>
</gene>
<evidence type="ECO:0000255" key="1">
    <source>
        <dbReference type="HAMAP-Rule" id="MF_01321"/>
    </source>
</evidence>
<geneLocation type="chloroplast"/>
<name>RPOB_CYCTA</name>
<reference key="1">
    <citation type="journal article" date="2007" name="Mol. Biol. Evol.">
        <title>Chloroplast genome (cpDNA) of Cycas taitungensis and 56 cp protein-coding genes of Gnetum parvifolium: insights into cpDNA evolution and phylogeny of extant seed plants.</title>
        <authorList>
            <person name="Wu C.-S."/>
            <person name="Wang Y.-N."/>
            <person name="Liu S.-M."/>
            <person name="Chaw S.-M."/>
        </authorList>
    </citation>
    <scope>NUCLEOTIDE SEQUENCE [LARGE SCALE GENOMIC DNA]</scope>
</reference>
<dbReference type="EC" id="2.7.7.6" evidence="1"/>
<dbReference type="EMBL" id="AP009339">
    <property type="protein sequence ID" value="BAF64925.1"/>
    <property type="molecule type" value="Genomic_DNA"/>
</dbReference>
<dbReference type="RefSeq" id="YP_001312184.1">
    <property type="nucleotide sequence ID" value="NC_009618.1"/>
</dbReference>
<dbReference type="SMR" id="A6H5F9"/>
<dbReference type="GeneID" id="5309613"/>
<dbReference type="GO" id="GO:0009507">
    <property type="term" value="C:chloroplast"/>
    <property type="evidence" value="ECO:0007669"/>
    <property type="project" value="UniProtKB-SubCell"/>
</dbReference>
<dbReference type="GO" id="GO:0000428">
    <property type="term" value="C:DNA-directed RNA polymerase complex"/>
    <property type="evidence" value="ECO:0007669"/>
    <property type="project" value="UniProtKB-KW"/>
</dbReference>
<dbReference type="GO" id="GO:0005739">
    <property type="term" value="C:mitochondrion"/>
    <property type="evidence" value="ECO:0007669"/>
    <property type="project" value="GOC"/>
</dbReference>
<dbReference type="GO" id="GO:0003677">
    <property type="term" value="F:DNA binding"/>
    <property type="evidence" value="ECO:0007669"/>
    <property type="project" value="UniProtKB-UniRule"/>
</dbReference>
<dbReference type="GO" id="GO:0003899">
    <property type="term" value="F:DNA-directed RNA polymerase activity"/>
    <property type="evidence" value="ECO:0007669"/>
    <property type="project" value="UniProtKB-UniRule"/>
</dbReference>
<dbReference type="GO" id="GO:0032549">
    <property type="term" value="F:ribonucleoside binding"/>
    <property type="evidence" value="ECO:0007669"/>
    <property type="project" value="InterPro"/>
</dbReference>
<dbReference type="GO" id="GO:0006351">
    <property type="term" value="P:DNA-templated transcription"/>
    <property type="evidence" value="ECO:0007669"/>
    <property type="project" value="UniProtKB-UniRule"/>
</dbReference>
<dbReference type="CDD" id="cd00653">
    <property type="entry name" value="RNA_pol_B_RPB2"/>
    <property type="match status" value="1"/>
</dbReference>
<dbReference type="Gene3D" id="2.40.50.100">
    <property type="match status" value="1"/>
</dbReference>
<dbReference type="Gene3D" id="2.40.50.150">
    <property type="match status" value="1"/>
</dbReference>
<dbReference type="Gene3D" id="3.90.1100.10">
    <property type="match status" value="1"/>
</dbReference>
<dbReference type="Gene3D" id="2.30.150.10">
    <property type="entry name" value="DNA-directed RNA polymerase, beta subunit, external 1 domain"/>
    <property type="match status" value="1"/>
</dbReference>
<dbReference type="Gene3D" id="2.40.270.10">
    <property type="entry name" value="DNA-directed RNA polymerase, subunit 2, domain 6"/>
    <property type="match status" value="1"/>
</dbReference>
<dbReference type="Gene3D" id="3.90.1800.10">
    <property type="entry name" value="RNA polymerase alpha subunit dimerisation domain"/>
    <property type="match status" value="1"/>
</dbReference>
<dbReference type="Gene3D" id="3.90.1110.10">
    <property type="entry name" value="RNA polymerase Rpb2, domain 2"/>
    <property type="match status" value="1"/>
</dbReference>
<dbReference type="HAMAP" id="MF_01321">
    <property type="entry name" value="RNApol_bact_RpoB"/>
    <property type="match status" value="1"/>
</dbReference>
<dbReference type="InterPro" id="IPR042107">
    <property type="entry name" value="DNA-dir_RNA_pol_bsu_ext_1_sf"/>
</dbReference>
<dbReference type="InterPro" id="IPR015712">
    <property type="entry name" value="DNA-dir_RNA_pol_su2"/>
</dbReference>
<dbReference type="InterPro" id="IPR007120">
    <property type="entry name" value="DNA-dir_RNAP_su2_dom"/>
</dbReference>
<dbReference type="InterPro" id="IPR037033">
    <property type="entry name" value="DNA-dir_RNAP_su2_hyb_sf"/>
</dbReference>
<dbReference type="InterPro" id="IPR010243">
    <property type="entry name" value="RNA_pol_bsu_bac"/>
</dbReference>
<dbReference type="InterPro" id="IPR007644">
    <property type="entry name" value="RNA_pol_bsu_protrusion"/>
</dbReference>
<dbReference type="InterPro" id="IPR007642">
    <property type="entry name" value="RNA_pol_Rpb2_2"/>
</dbReference>
<dbReference type="InterPro" id="IPR037034">
    <property type="entry name" value="RNA_pol_Rpb2_2_sf"/>
</dbReference>
<dbReference type="InterPro" id="IPR007645">
    <property type="entry name" value="RNA_pol_Rpb2_3"/>
</dbReference>
<dbReference type="InterPro" id="IPR007641">
    <property type="entry name" value="RNA_pol_Rpb2_7"/>
</dbReference>
<dbReference type="InterPro" id="IPR014724">
    <property type="entry name" value="RNA_pol_RPB2_OB-fold"/>
</dbReference>
<dbReference type="NCBIfam" id="NF001616">
    <property type="entry name" value="PRK00405.1"/>
    <property type="match status" value="1"/>
</dbReference>
<dbReference type="PANTHER" id="PTHR20856">
    <property type="entry name" value="DNA-DIRECTED RNA POLYMERASE I SUBUNIT 2"/>
    <property type="match status" value="1"/>
</dbReference>
<dbReference type="Pfam" id="PF04563">
    <property type="entry name" value="RNA_pol_Rpb2_1"/>
    <property type="match status" value="1"/>
</dbReference>
<dbReference type="Pfam" id="PF04561">
    <property type="entry name" value="RNA_pol_Rpb2_2"/>
    <property type="match status" value="1"/>
</dbReference>
<dbReference type="Pfam" id="PF04565">
    <property type="entry name" value="RNA_pol_Rpb2_3"/>
    <property type="match status" value="1"/>
</dbReference>
<dbReference type="Pfam" id="PF00562">
    <property type="entry name" value="RNA_pol_Rpb2_6"/>
    <property type="match status" value="1"/>
</dbReference>
<dbReference type="Pfam" id="PF04560">
    <property type="entry name" value="RNA_pol_Rpb2_7"/>
    <property type="match status" value="1"/>
</dbReference>
<dbReference type="SUPFAM" id="SSF64484">
    <property type="entry name" value="beta and beta-prime subunits of DNA dependent RNA-polymerase"/>
    <property type="match status" value="1"/>
</dbReference>
<feature type="chain" id="PRO_0000300439" description="DNA-directed RNA polymerase subunit beta">
    <location>
        <begin position="1"/>
        <end position="1072"/>
    </location>
</feature>
<keyword id="KW-0150">Chloroplast</keyword>
<keyword id="KW-0240">DNA-directed RNA polymerase</keyword>
<keyword id="KW-0548">Nucleotidyltransferase</keyword>
<keyword id="KW-0934">Plastid</keyword>
<keyword id="KW-0804">Transcription</keyword>
<keyword id="KW-0808">Transferase</keyword>
<proteinExistence type="inferred from homology"/>
<comment type="function">
    <text evidence="1">DNA-dependent RNA polymerase catalyzes the transcription of DNA into RNA using the four ribonucleoside triphosphates as substrates.</text>
</comment>
<comment type="catalytic activity">
    <reaction evidence="1">
        <text>RNA(n) + a ribonucleoside 5'-triphosphate = RNA(n+1) + diphosphate</text>
        <dbReference type="Rhea" id="RHEA:21248"/>
        <dbReference type="Rhea" id="RHEA-COMP:14527"/>
        <dbReference type="Rhea" id="RHEA-COMP:17342"/>
        <dbReference type="ChEBI" id="CHEBI:33019"/>
        <dbReference type="ChEBI" id="CHEBI:61557"/>
        <dbReference type="ChEBI" id="CHEBI:140395"/>
        <dbReference type="EC" id="2.7.7.6"/>
    </reaction>
</comment>
<comment type="subunit">
    <text evidence="1">In plastids the minimal PEP RNA polymerase catalytic core is composed of four subunits: alpha, beta, beta', and beta''. When a (nuclear-encoded) sigma factor is associated with the core the holoenzyme is formed, which can initiate transcription.</text>
</comment>
<comment type="subcellular location">
    <subcellularLocation>
        <location>Plastid</location>
        <location>Chloroplast</location>
    </subcellularLocation>
</comment>
<comment type="similarity">
    <text evidence="1">Belongs to the RNA polymerase beta chain family.</text>
</comment>